<reference key="1">
    <citation type="journal article" date="1999" name="Gene">
        <title>A compact gene cluster in Drosophila: the unrelated Cs gene is compressed between duplicated amd and Ddc.</title>
        <authorList>
            <person name="Tatarenkov A."/>
            <person name="Saez A.G."/>
            <person name="Ayala F.J."/>
        </authorList>
    </citation>
    <scope>NUCLEOTIDE SEQUENCE [GENOMIC DNA]</scope>
    <source>
        <strain>St. Lucia</strain>
    </source>
</reference>
<reference key="2">
    <citation type="journal article" date="1987" name="Mol. Gen. Genet.">
        <title>Overlapping transcription units in Drosophila: sequence and structure of the Cs gene.</title>
        <authorList>
            <person name="Eveleth D.D."/>
            <person name="Marsh J.L."/>
        </authorList>
    </citation>
    <scope>NUCLEOTIDE SEQUENCE [GENOMIC DNA]</scope>
</reference>
<reference key="3">
    <citation type="journal article" date="2000" name="Science">
        <title>The genome sequence of Drosophila melanogaster.</title>
        <authorList>
            <person name="Adams M.D."/>
            <person name="Celniker S.E."/>
            <person name="Holt R.A."/>
            <person name="Evans C.A."/>
            <person name="Gocayne J.D."/>
            <person name="Amanatides P.G."/>
            <person name="Scherer S.E."/>
            <person name="Li P.W."/>
            <person name="Hoskins R.A."/>
            <person name="Galle R.F."/>
            <person name="George R.A."/>
            <person name="Lewis S.E."/>
            <person name="Richards S."/>
            <person name="Ashburner M."/>
            <person name="Henderson S.N."/>
            <person name="Sutton G.G."/>
            <person name="Wortman J.R."/>
            <person name="Yandell M.D."/>
            <person name="Zhang Q."/>
            <person name="Chen L.X."/>
            <person name="Brandon R.C."/>
            <person name="Rogers Y.-H.C."/>
            <person name="Blazej R.G."/>
            <person name="Champe M."/>
            <person name="Pfeiffer B.D."/>
            <person name="Wan K.H."/>
            <person name="Doyle C."/>
            <person name="Baxter E.G."/>
            <person name="Helt G."/>
            <person name="Nelson C.R."/>
            <person name="Miklos G.L.G."/>
            <person name="Abril J.F."/>
            <person name="Agbayani A."/>
            <person name="An H.-J."/>
            <person name="Andrews-Pfannkoch C."/>
            <person name="Baldwin D."/>
            <person name="Ballew R.M."/>
            <person name="Basu A."/>
            <person name="Baxendale J."/>
            <person name="Bayraktaroglu L."/>
            <person name="Beasley E.M."/>
            <person name="Beeson K.Y."/>
            <person name="Benos P.V."/>
            <person name="Berman B.P."/>
            <person name="Bhandari D."/>
            <person name="Bolshakov S."/>
            <person name="Borkova D."/>
            <person name="Botchan M.R."/>
            <person name="Bouck J."/>
            <person name="Brokstein P."/>
            <person name="Brottier P."/>
            <person name="Burtis K.C."/>
            <person name="Busam D.A."/>
            <person name="Butler H."/>
            <person name="Cadieu E."/>
            <person name="Center A."/>
            <person name="Chandra I."/>
            <person name="Cherry J.M."/>
            <person name="Cawley S."/>
            <person name="Dahlke C."/>
            <person name="Davenport L.B."/>
            <person name="Davies P."/>
            <person name="de Pablos B."/>
            <person name="Delcher A."/>
            <person name="Deng Z."/>
            <person name="Mays A.D."/>
            <person name="Dew I."/>
            <person name="Dietz S.M."/>
            <person name="Dodson K."/>
            <person name="Doup L.E."/>
            <person name="Downes M."/>
            <person name="Dugan-Rocha S."/>
            <person name="Dunkov B.C."/>
            <person name="Dunn P."/>
            <person name="Durbin K.J."/>
            <person name="Evangelista C.C."/>
            <person name="Ferraz C."/>
            <person name="Ferriera S."/>
            <person name="Fleischmann W."/>
            <person name="Fosler C."/>
            <person name="Gabrielian A.E."/>
            <person name="Garg N.S."/>
            <person name="Gelbart W.M."/>
            <person name="Glasser K."/>
            <person name="Glodek A."/>
            <person name="Gong F."/>
            <person name="Gorrell J.H."/>
            <person name="Gu Z."/>
            <person name="Guan P."/>
            <person name="Harris M."/>
            <person name="Harris N.L."/>
            <person name="Harvey D.A."/>
            <person name="Heiman T.J."/>
            <person name="Hernandez J.R."/>
            <person name="Houck J."/>
            <person name="Hostin D."/>
            <person name="Houston K.A."/>
            <person name="Howland T.J."/>
            <person name="Wei M.-H."/>
            <person name="Ibegwam C."/>
            <person name="Jalali M."/>
            <person name="Kalush F."/>
            <person name="Karpen G.H."/>
            <person name="Ke Z."/>
            <person name="Kennison J.A."/>
            <person name="Ketchum K.A."/>
            <person name="Kimmel B.E."/>
            <person name="Kodira C.D."/>
            <person name="Kraft C.L."/>
            <person name="Kravitz S."/>
            <person name="Kulp D."/>
            <person name="Lai Z."/>
            <person name="Lasko P."/>
            <person name="Lei Y."/>
            <person name="Levitsky A.A."/>
            <person name="Li J.H."/>
            <person name="Li Z."/>
            <person name="Liang Y."/>
            <person name="Lin X."/>
            <person name="Liu X."/>
            <person name="Mattei B."/>
            <person name="McIntosh T.C."/>
            <person name="McLeod M.P."/>
            <person name="McPherson D."/>
            <person name="Merkulov G."/>
            <person name="Milshina N.V."/>
            <person name="Mobarry C."/>
            <person name="Morris J."/>
            <person name="Moshrefi A."/>
            <person name="Mount S.M."/>
            <person name="Moy M."/>
            <person name="Murphy B."/>
            <person name="Murphy L."/>
            <person name="Muzny D.M."/>
            <person name="Nelson D.L."/>
            <person name="Nelson D.R."/>
            <person name="Nelson K.A."/>
            <person name="Nixon K."/>
            <person name="Nusskern D.R."/>
            <person name="Pacleb J.M."/>
            <person name="Palazzolo M."/>
            <person name="Pittman G.S."/>
            <person name="Pan S."/>
            <person name="Pollard J."/>
            <person name="Puri V."/>
            <person name="Reese M.G."/>
            <person name="Reinert K."/>
            <person name="Remington K."/>
            <person name="Saunders R.D.C."/>
            <person name="Scheeler F."/>
            <person name="Shen H."/>
            <person name="Shue B.C."/>
            <person name="Siden-Kiamos I."/>
            <person name="Simpson M."/>
            <person name="Skupski M.P."/>
            <person name="Smith T.J."/>
            <person name="Spier E."/>
            <person name="Spradling A.C."/>
            <person name="Stapleton M."/>
            <person name="Strong R."/>
            <person name="Sun E."/>
            <person name="Svirskas R."/>
            <person name="Tector C."/>
            <person name="Turner R."/>
            <person name="Venter E."/>
            <person name="Wang A.H."/>
            <person name="Wang X."/>
            <person name="Wang Z.-Y."/>
            <person name="Wassarman D.A."/>
            <person name="Weinstock G.M."/>
            <person name="Weissenbach J."/>
            <person name="Williams S.M."/>
            <person name="Woodage T."/>
            <person name="Worley K.C."/>
            <person name="Wu D."/>
            <person name="Yang S."/>
            <person name="Yao Q.A."/>
            <person name="Ye J."/>
            <person name="Yeh R.-F."/>
            <person name="Zaveri J.S."/>
            <person name="Zhan M."/>
            <person name="Zhang G."/>
            <person name="Zhao Q."/>
            <person name="Zheng L."/>
            <person name="Zheng X.H."/>
            <person name="Zhong F.N."/>
            <person name="Zhong W."/>
            <person name="Zhou X."/>
            <person name="Zhu S.C."/>
            <person name="Zhu X."/>
            <person name="Smith H.O."/>
            <person name="Gibbs R.A."/>
            <person name="Myers E.W."/>
            <person name="Rubin G.M."/>
            <person name="Venter J.C."/>
        </authorList>
    </citation>
    <scope>NUCLEOTIDE SEQUENCE [LARGE SCALE GENOMIC DNA]</scope>
    <source>
        <strain>Berkeley</strain>
    </source>
</reference>
<reference key="4">
    <citation type="journal article" date="2002" name="Genome Biol.">
        <title>Annotation of the Drosophila melanogaster euchromatic genome: a systematic review.</title>
        <authorList>
            <person name="Misra S."/>
            <person name="Crosby M.A."/>
            <person name="Mungall C.J."/>
            <person name="Matthews B.B."/>
            <person name="Campbell K.S."/>
            <person name="Hradecky P."/>
            <person name="Huang Y."/>
            <person name="Kaminker J.S."/>
            <person name="Millburn G.H."/>
            <person name="Prochnik S.E."/>
            <person name="Smith C.D."/>
            <person name="Tupy J.L."/>
            <person name="Whitfield E.J."/>
            <person name="Bayraktaroglu L."/>
            <person name="Berman B.P."/>
            <person name="Bettencourt B.R."/>
            <person name="Celniker S.E."/>
            <person name="de Grey A.D.N.J."/>
            <person name="Drysdale R.A."/>
            <person name="Harris N.L."/>
            <person name="Richter J."/>
            <person name="Russo S."/>
            <person name="Schroeder A.J."/>
            <person name="Shu S.Q."/>
            <person name="Stapleton M."/>
            <person name="Yamada C."/>
            <person name="Ashburner M."/>
            <person name="Gelbart W.M."/>
            <person name="Rubin G.M."/>
            <person name="Lewis S.E."/>
        </authorList>
    </citation>
    <scope>GENOME REANNOTATION</scope>
    <source>
        <strain>Berkeley</strain>
    </source>
</reference>
<reference key="5">
    <citation type="journal article" date="2002" name="Genome Biol.">
        <title>A Drosophila full-length cDNA resource.</title>
        <authorList>
            <person name="Stapleton M."/>
            <person name="Carlson J.W."/>
            <person name="Brokstein P."/>
            <person name="Yu C."/>
            <person name="Champe M."/>
            <person name="George R.A."/>
            <person name="Guarin H."/>
            <person name="Kronmiller B."/>
            <person name="Pacleb J.M."/>
            <person name="Park S."/>
            <person name="Wan K.H."/>
            <person name="Rubin G.M."/>
            <person name="Celniker S.E."/>
        </authorList>
    </citation>
    <scope>NUCLEOTIDE SEQUENCE [LARGE SCALE MRNA]</scope>
    <source>
        <strain>Berkeley</strain>
        <tissue>Head</tissue>
    </source>
</reference>
<reference key="6">
    <citation type="journal article" date="1986" name="Nature">
        <title>Overlapping transcription units in the dopa decarboxylase region of Drosophila.</title>
        <authorList>
            <person name="Spencer C.A."/>
            <person name="Gietz R.D."/>
            <person name="Hodgetts R.B."/>
        </authorList>
    </citation>
    <scope>TISSUE SPECIFICITY</scope>
    <scope>DEVELOPMENTAL STAGE</scope>
</reference>
<reference key="7">
    <citation type="journal article" date="1986" name="Dev. Biol.">
        <title>Analysis of the transcription unit adjacent to the 3'-end of the dopa decarboxylase gene in Drosophila melanogaster.</title>
        <authorList>
            <person name="Spencer C.A."/>
            <person name="Gietz R.D."/>
            <person name="Hodgetts R.B."/>
        </authorList>
    </citation>
    <scope>DEVELOPMENTAL STAGE</scope>
</reference>
<keyword id="KW-0963">Cytoplasm</keyword>
<keyword id="KW-1185">Reference proteome</keyword>
<comment type="function">
    <text>Has a non-vital function.</text>
</comment>
<comment type="subcellular location">
    <subcellularLocation>
        <location>Cytoplasm</location>
    </subcellularLocation>
</comment>
<comment type="tissue specificity">
    <text evidence="1">Low levels seen in adult heads, thorax, abdomen and ovaries, high levels in testes.</text>
</comment>
<comment type="developmental stage">
    <text evidence="1 2">Abundant in embryos and adults.</text>
</comment>
<comment type="sequence caution" evidence="3">
    <conflict type="erroneous gene model prediction">
        <sequence resource="EMBL-CDS" id="CAA29405"/>
    </conflict>
</comment>
<comment type="sequence caution" evidence="3">
    <conflict type="frameshift">
        <sequence resource="EMBL-CDS" id="CAA29405"/>
    </conflict>
</comment>
<comment type="sequence caution" evidence="3">
    <conflict type="erroneous gene model prediction">
        <sequence resource="EMBL-CDS" id="CAA29406"/>
    </conflict>
</comment>
<comment type="sequence caution" evidence="3">
    <conflict type="frameshift">
        <sequence resource="EMBL-CDS" id="CAA29406"/>
    </conflict>
</comment>
<comment type="sequence caution" evidence="3">
    <conflict type="erroneous gene model prediction">
        <sequence resource="EMBL-CDS" id="CAA29407"/>
    </conflict>
</comment>
<comment type="sequence caution" evidence="3">
    <conflict type="frameshift">
        <sequence resource="EMBL-CDS" id="CAA29407"/>
    </conflict>
</comment>
<comment type="sequence caution" evidence="3">
    <conflict type="erroneous gene model prediction">
        <sequence resource="EMBL-CDS" id="CAA29408"/>
    </conflict>
</comment>
<comment type="sequence caution" evidence="3">
    <conflict type="frameshift">
        <sequence resource="EMBL-CDS" id="CAA29408"/>
    </conflict>
</comment>
<organism>
    <name type="scientific">Drosophila melanogaster</name>
    <name type="common">Fruit fly</name>
    <dbReference type="NCBI Taxonomy" id="7227"/>
    <lineage>
        <taxon>Eukaryota</taxon>
        <taxon>Metazoa</taxon>
        <taxon>Ecdysozoa</taxon>
        <taxon>Arthropoda</taxon>
        <taxon>Hexapoda</taxon>
        <taxon>Insecta</taxon>
        <taxon>Pterygota</taxon>
        <taxon>Neoptera</taxon>
        <taxon>Endopterygota</taxon>
        <taxon>Diptera</taxon>
        <taxon>Brachycera</taxon>
        <taxon>Muscomorpha</taxon>
        <taxon>Ephydroidea</taxon>
        <taxon>Drosophilidae</taxon>
        <taxon>Drosophila</taxon>
        <taxon>Sophophora</taxon>
    </lineage>
</organism>
<gene>
    <name type="primary">anon-37Cs</name>
    <name type="synonym">cs</name>
    <name type="synonym">l(2)37Cs</name>
    <name type="ORF">CG10561</name>
</gene>
<dbReference type="EMBL" id="AF091328">
    <property type="protein sequence ID" value="AAC67581.1"/>
    <property type="molecule type" value="Genomic_DNA"/>
</dbReference>
<dbReference type="EMBL" id="X05991">
    <property type="protein sequence ID" value="CAA29405.1"/>
    <property type="status" value="ALT_SEQ"/>
    <property type="molecule type" value="Genomic_DNA"/>
</dbReference>
<dbReference type="EMBL" id="X05991">
    <property type="protein sequence ID" value="CAA29406.1"/>
    <property type="status" value="ALT_SEQ"/>
    <property type="molecule type" value="Genomic_DNA"/>
</dbReference>
<dbReference type="EMBL" id="X05991">
    <property type="protein sequence ID" value="CAA29407.1"/>
    <property type="status" value="ALT_SEQ"/>
    <property type="molecule type" value="Genomic_DNA"/>
</dbReference>
<dbReference type="EMBL" id="X05991">
    <property type="protein sequence ID" value="CAA29408.1"/>
    <property type="status" value="ALT_SEQ"/>
    <property type="molecule type" value="Genomic_DNA"/>
</dbReference>
<dbReference type="EMBL" id="AE014134">
    <property type="protein sequence ID" value="AAF53761.2"/>
    <property type="molecule type" value="Genomic_DNA"/>
</dbReference>
<dbReference type="EMBL" id="AY058445">
    <property type="protein sequence ID" value="AAL13674.1"/>
    <property type="molecule type" value="mRNA"/>
</dbReference>
<dbReference type="PIR" id="S01102">
    <property type="entry name" value="S01102"/>
</dbReference>
<dbReference type="PIR" id="S01103">
    <property type="entry name" value="S01103"/>
</dbReference>
<dbReference type="PIR" id="S01104">
    <property type="entry name" value="S01104"/>
</dbReference>
<dbReference type="PIR" id="S01105">
    <property type="entry name" value="S01105"/>
</dbReference>
<dbReference type="RefSeq" id="NP_476608.1">
    <property type="nucleotide sequence ID" value="NM_057260.4"/>
</dbReference>
<dbReference type="SMR" id="P18487"/>
<dbReference type="BioGRID" id="61174">
    <property type="interactions" value="2"/>
</dbReference>
<dbReference type="DIP" id="DIP-18447N"/>
<dbReference type="FunCoup" id="P18487">
    <property type="interactions" value="267"/>
</dbReference>
<dbReference type="STRING" id="7227.FBpp0080699"/>
<dbReference type="PaxDb" id="7227-FBpp0080699"/>
<dbReference type="DNASU" id="35189"/>
<dbReference type="EnsemblMetazoa" id="FBtr0081155">
    <property type="protein sequence ID" value="FBpp0080699"/>
    <property type="gene ID" value="FBgn0002036"/>
</dbReference>
<dbReference type="GeneID" id="35189"/>
<dbReference type="KEGG" id="dme:Dmel_CG10561"/>
<dbReference type="AGR" id="FB:FBgn0002036"/>
<dbReference type="FlyBase" id="FBgn0002036">
    <property type="gene designation" value="CG10561"/>
</dbReference>
<dbReference type="VEuPathDB" id="VectorBase:FBgn0002036"/>
<dbReference type="eggNOG" id="KOG0685">
    <property type="taxonomic scope" value="Eukaryota"/>
</dbReference>
<dbReference type="GeneTree" id="ENSGT00940000174397"/>
<dbReference type="HOGENOM" id="CLU_004498_2_3_1"/>
<dbReference type="InParanoid" id="P18487"/>
<dbReference type="OMA" id="HITSCPV"/>
<dbReference type="OrthoDB" id="2219495at2759"/>
<dbReference type="PhylomeDB" id="P18487"/>
<dbReference type="Reactome" id="R-DME-141334">
    <property type="pathway name" value="PAOs oxidise polyamines to amines"/>
</dbReference>
<dbReference type="Reactome" id="R-DME-351200">
    <property type="pathway name" value="Interconversion of polyamines"/>
</dbReference>
<dbReference type="BioGRID-ORCS" id="35189">
    <property type="hits" value="0 hits in 1 CRISPR screen"/>
</dbReference>
<dbReference type="GenomeRNAi" id="35189"/>
<dbReference type="PRO" id="PR:P18487"/>
<dbReference type="Proteomes" id="UP000000803">
    <property type="component" value="Chromosome 2L"/>
</dbReference>
<dbReference type="Bgee" id="FBgn0002036">
    <property type="expression patterns" value="Expressed in early-mid elongation-stage spermatid (Drosophila) in testis and 120 other cell types or tissues"/>
</dbReference>
<dbReference type="ExpressionAtlas" id="P18487">
    <property type="expression patterns" value="baseline and differential"/>
</dbReference>
<dbReference type="GO" id="GO:0005737">
    <property type="term" value="C:cytoplasm"/>
    <property type="evidence" value="ECO:0000314"/>
    <property type="project" value="UniProtKB"/>
</dbReference>
<dbReference type="GO" id="GO:0046592">
    <property type="term" value="F:polyamine oxidase activity"/>
    <property type="evidence" value="ECO:0000318"/>
    <property type="project" value="GO_Central"/>
</dbReference>
<dbReference type="Gene3D" id="3.90.660.10">
    <property type="match status" value="1"/>
</dbReference>
<dbReference type="Gene3D" id="3.50.50.60">
    <property type="entry name" value="FAD/NAD(P)-binding domain"/>
    <property type="match status" value="1"/>
</dbReference>
<dbReference type="InterPro" id="IPR002937">
    <property type="entry name" value="Amino_oxidase"/>
</dbReference>
<dbReference type="InterPro" id="IPR036188">
    <property type="entry name" value="FAD/NAD-bd_sf"/>
</dbReference>
<dbReference type="InterPro" id="IPR050281">
    <property type="entry name" value="Flavin_monoamine_oxidase"/>
</dbReference>
<dbReference type="PANTHER" id="PTHR10742:SF398">
    <property type="entry name" value="AMINE OXIDASE DOMAIN-CONTAINING PROTEIN-RELATED"/>
    <property type="match status" value="1"/>
</dbReference>
<dbReference type="PANTHER" id="PTHR10742">
    <property type="entry name" value="FLAVIN MONOAMINE OXIDASE"/>
    <property type="match status" value="1"/>
</dbReference>
<dbReference type="Pfam" id="PF01593">
    <property type="entry name" value="Amino_oxidase"/>
    <property type="match status" value="1"/>
</dbReference>
<dbReference type="SUPFAM" id="SSF54373">
    <property type="entry name" value="FAD-linked reductases, C-terminal domain"/>
    <property type="match status" value="1"/>
</dbReference>
<dbReference type="SUPFAM" id="SSF51905">
    <property type="entry name" value="FAD/NAD(P)-binding domain"/>
    <property type="match status" value="1"/>
</dbReference>
<protein>
    <recommendedName>
        <fullName>Protein anon-37Cs</fullName>
    </recommendedName>
</protein>
<evidence type="ECO:0000269" key="1">
    <source>
    </source>
</evidence>
<evidence type="ECO:0000269" key="2">
    <source>
    </source>
</evidence>
<evidence type="ECO:0000305" key="3"/>
<accession>P18487</accession>
<accession>O18376</accession>
<accession>O18377</accession>
<accession>O18378</accession>
<accession>O96568</accession>
<accession>Q95TY1</accession>
<accession>Q9VIZ7</accession>
<sequence>MQCFKLASRRSLYNARVLQADNIGDKQRSPDLEAARQNTQIVVVGAGLAGLSAAQHLLSHGFRRTVILEATDRYGGRINTQRFGDTYCELGAKWVKIDGSQDSMYELLRNTEGLGKQIKQPDRATYLQDGSRINPAMVELIDTLFRQLCRGFKVSERVKTGGDLHSLDNVMNYFRTESDRIIGVSFQHPKDQLAAREIFQSLFKEFGSILGCCLEYVNIEHITKCPVQQEQRPLYVPTGLDNVVDDLIQNMDKAQLQTGKPVGQIQWTPAPMKSVGCLDGSLYNADHIICTLPLGVLKSFAGVLFRPTLPLDKMLAIRNLGFGNPLKIYLSYKKPIGRWLKGSLRPLGTLLNPSVEQQPERNWTQQVVEISQVPSSQHVLEVHVGGGYYEEIEKLPDEELLEQITGLLRRCVSSHLVPYPQELLRSNWSTSACYLGGRPYFSTNSSARDVQRLAAPLGEKSPGLLFAGDATSLRGFGTIDAARSSGIREAQRIIDYYLKSVHCG</sequence>
<proteinExistence type="evidence at transcript level"/>
<feature type="chain" id="PRO_0000064404" description="Protein anon-37Cs">
    <location>
        <begin position="1"/>
        <end position="504"/>
    </location>
</feature>
<feature type="sequence conflict" description="In Ref. 5; AAL13674." evidence="3" ref="5">
    <original>A</original>
    <variation>S</variation>
    <location>
        <position position="53"/>
    </location>
</feature>
<feature type="sequence conflict" description="In Ref. 1; AAC67581/CAA29408." evidence="3" ref="1">
    <original>L</original>
    <variation>R</variation>
    <location>
        <position position="234"/>
    </location>
</feature>
<feature type="sequence conflict" description="In Ref. 1; AAC67581." evidence="3" ref="1">
    <original>G</original>
    <variation>D</variation>
    <location>
        <position position="458"/>
    </location>
</feature>
<feature type="sequence conflict" description="In Ref. 1; AAC67581." evidence="3" ref="1">
    <original>G</original>
    <variation>S</variation>
    <location>
        <position position="475"/>
    </location>
</feature>
<name>A37C_DROME</name>